<organism>
    <name type="scientific">Aliivibrio fischeri (strain ATCC 700601 / ES114)</name>
    <name type="common">Vibrio fischeri</name>
    <dbReference type="NCBI Taxonomy" id="312309"/>
    <lineage>
        <taxon>Bacteria</taxon>
        <taxon>Pseudomonadati</taxon>
        <taxon>Pseudomonadota</taxon>
        <taxon>Gammaproteobacteria</taxon>
        <taxon>Vibrionales</taxon>
        <taxon>Vibrionaceae</taxon>
        <taxon>Aliivibrio</taxon>
    </lineage>
</organism>
<comment type="function">
    <text evidence="1">Involved in urease metallocenter assembly. Binds nickel. Probably functions as a nickel donor during metallocenter assembly.</text>
</comment>
<comment type="subcellular location">
    <subcellularLocation>
        <location evidence="1">Cytoplasm</location>
    </subcellularLocation>
</comment>
<comment type="similarity">
    <text evidence="1">Belongs to the UreE family.</text>
</comment>
<keyword id="KW-0143">Chaperone</keyword>
<keyword id="KW-0963">Cytoplasm</keyword>
<keyword id="KW-0533">Nickel</keyword>
<keyword id="KW-0996">Nickel insertion</keyword>
<keyword id="KW-1185">Reference proteome</keyword>
<gene>
    <name evidence="1" type="primary">ureE</name>
    <name type="ordered locus">VF_0672</name>
</gene>
<reference key="1">
    <citation type="journal article" date="2005" name="Proc. Natl. Acad. Sci. U.S.A.">
        <title>Complete genome sequence of Vibrio fischeri: a symbiotic bacterium with pathogenic congeners.</title>
        <authorList>
            <person name="Ruby E.G."/>
            <person name="Urbanowski M."/>
            <person name="Campbell J."/>
            <person name="Dunn A."/>
            <person name="Faini M."/>
            <person name="Gunsalus R."/>
            <person name="Lostroh P."/>
            <person name="Lupp C."/>
            <person name="McCann J."/>
            <person name="Millikan D."/>
            <person name="Schaefer A."/>
            <person name="Stabb E."/>
            <person name="Stevens A."/>
            <person name="Visick K."/>
            <person name="Whistler C."/>
            <person name="Greenberg E.P."/>
        </authorList>
    </citation>
    <scope>NUCLEOTIDE SEQUENCE [LARGE SCALE GENOMIC DNA]</scope>
    <source>
        <strain>ATCC 700601 / ES114</strain>
    </source>
</reference>
<accession>Q5E729</accession>
<proteinExistence type="inferred from homology"/>
<dbReference type="EMBL" id="CP000020">
    <property type="protein sequence ID" value="AAW85167.1"/>
    <property type="molecule type" value="Genomic_DNA"/>
</dbReference>
<dbReference type="RefSeq" id="WP_011261401.1">
    <property type="nucleotide sequence ID" value="NC_006840.2"/>
</dbReference>
<dbReference type="RefSeq" id="YP_204055.1">
    <property type="nucleotide sequence ID" value="NC_006840.2"/>
</dbReference>
<dbReference type="SMR" id="Q5E729"/>
<dbReference type="STRING" id="312309.VF_0672"/>
<dbReference type="EnsemblBacteria" id="AAW85167">
    <property type="protein sequence ID" value="AAW85167"/>
    <property type="gene ID" value="VF_0672"/>
</dbReference>
<dbReference type="GeneID" id="54163327"/>
<dbReference type="KEGG" id="vfi:VF_0672"/>
<dbReference type="PATRIC" id="fig|312309.11.peg.665"/>
<dbReference type="eggNOG" id="COG2371">
    <property type="taxonomic scope" value="Bacteria"/>
</dbReference>
<dbReference type="HOGENOM" id="CLU_093757_2_0_6"/>
<dbReference type="OrthoDB" id="5421304at2"/>
<dbReference type="Proteomes" id="UP000000537">
    <property type="component" value="Chromosome I"/>
</dbReference>
<dbReference type="GO" id="GO:0005737">
    <property type="term" value="C:cytoplasm"/>
    <property type="evidence" value="ECO:0007669"/>
    <property type="project" value="UniProtKB-SubCell"/>
</dbReference>
<dbReference type="GO" id="GO:0016151">
    <property type="term" value="F:nickel cation binding"/>
    <property type="evidence" value="ECO:0007669"/>
    <property type="project" value="UniProtKB-UniRule"/>
</dbReference>
<dbReference type="GO" id="GO:0051082">
    <property type="term" value="F:unfolded protein binding"/>
    <property type="evidence" value="ECO:0007669"/>
    <property type="project" value="UniProtKB-UniRule"/>
</dbReference>
<dbReference type="GO" id="GO:0006457">
    <property type="term" value="P:protein folding"/>
    <property type="evidence" value="ECO:0007669"/>
    <property type="project" value="InterPro"/>
</dbReference>
<dbReference type="GO" id="GO:0065003">
    <property type="term" value="P:protein-containing complex assembly"/>
    <property type="evidence" value="ECO:0007669"/>
    <property type="project" value="InterPro"/>
</dbReference>
<dbReference type="GO" id="GO:0019627">
    <property type="term" value="P:urea metabolic process"/>
    <property type="evidence" value="ECO:0007669"/>
    <property type="project" value="InterPro"/>
</dbReference>
<dbReference type="CDD" id="cd00571">
    <property type="entry name" value="UreE"/>
    <property type="match status" value="1"/>
</dbReference>
<dbReference type="Gene3D" id="2.60.260.20">
    <property type="entry name" value="Urease metallochaperone UreE, N-terminal domain"/>
    <property type="match status" value="1"/>
</dbReference>
<dbReference type="Gene3D" id="3.30.70.790">
    <property type="entry name" value="UreE, C-terminal domain"/>
    <property type="match status" value="1"/>
</dbReference>
<dbReference type="HAMAP" id="MF_00822">
    <property type="entry name" value="UreE"/>
    <property type="match status" value="1"/>
</dbReference>
<dbReference type="InterPro" id="IPR012406">
    <property type="entry name" value="UreE"/>
</dbReference>
<dbReference type="InterPro" id="IPR007864">
    <property type="entry name" value="UreE_C_dom"/>
</dbReference>
<dbReference type="InterPro" id="IPR004029">
    <property type="entry name" value="UreE_N"/>
</dbReference>
<dbReference type="InterPro" id="IPR036118">
    <property type="entry name" value="UreE_N_sf"/>
</dbReference>
<dbReference type="NCBIfam" id="NF009751">
    <property type="entry name" value="PRK13261.1-1"/>
    <property type="match status" value="1"/>
</dbReference>
<dbReference type="Pfam" id="PF05194">
    <property type="entry name" value="UreE_C"/>
    <property type="match status" value="1"/>
</dbReference>
<dbReference type="Pfam" id="PF02814">
    <property type="entry name" value="UreE_N"/>
    <property type="match status" value="1"/>
</dbReference>
<dbReference type="PIRSF" id="PIRSF036402">
    <property type="entry name" value="Ureas_acces_UreE"/>
    <property type="match status" value="1"/>
</dbReference>
<dbReference type="SMART" id="SM00988">
    <property type="entry name" value="UreE_N"/>
    <property type="match status" value="1"/>
</dbReference>
<dbReference type="SUPFAM" id="SSF69737">
    <property type="entry name" value="Urease metallochaperone UreE, C-terminal domain"/>
    <property type="match status" value="1"/>
</dbReference>
<dbReference type="SUPFAM" id="SSF69287">
    <property type="entry name" value="Urease metallochaperone UreE, N-terminal domain"/>
    <property type="match status" value="1"/>
</dbReference>
<feature type="chain" id="PRO_0000223453" description="Urease accessory protein UreE">
    <location>
        <begin position="1"/>
        <end position="163"/>
    </location>
</feature>
<feature type="region of interest" description="Disordered" evidence="2">
    <location>
        <begin position="144"/>
        <end position="163"/>
    </location>
</feature>
<name>UREE_ALIF1</name>
<evidence type="ECO:0000255" key="1">
    <source>
        <dbReference type="HAMAP-Rule" id="MF_00822"/>
    </source>
</evidence>
<evidence type="ECO:0000256" key="2">
    <source>
        <dbReference type="SAM" id="MobiDB-lite"/>
    </source>
</evidence>
<protein>
    <recommendedName>
        <fullName evidence="1">Urease accessory protein UreE</fullName>
    </recommendedName>
</protein>
<sequence length="163" mass="18287">MIKFTHLVHHHHDEHHHNEEHAHNATELTICLTMQERTKSRLKVMLSDGSEAGLFLPRGTVLKEHDIVESDDGVQAMITAAEETVSTVYSDDLLLLAKACYHLGNRHVPLQVEAGWCRYLHDHVLDDMVQRLGLNVKVEQAKYQPEPGAYGGSSAGSHDGHHH</sequence>